<protein>
    <recommendedName>
        <fullName evidence="1">Large ribosomal subunit protein uL16</fullName>
    </recommendedName>
    <alternativeName>
        <fullName evidence="2">50S ribosomal protein L16</fullName>
    </alternativeName>
</protein>
<gene>
    <name evidence="1" type="primary">rplP</name>
    <name evidence="1" type="synonym">rpl16</name>
    <name type="ordered locus">PCC7424_3710</name>
</gene>
<sequence>MLSPRRTKFRKQQRGRMKGLASRGNTINFGDFGLQATEPCWITSRQIEAARRAITRYVRRGGKIWIRIFPDKPITMRPAETRMGSGKGSPEFWVAVVKPGRIMFEIAGVSEEIAREAMRLAAQKLPIKTKFVGREEEYN</sequence>
<organism>
    <name type="scientific">Gloeothece citriformis (strain PCC 7424)</name>
    <name type="common">Cyanothece sp. (strain PCC 7424)</name>
    <dbReference type="NCBI Taxonomy" id="65393"/>
    <lineage>
        <taxon>Bacteria</taxon>
        <taxon>Bacillati</taxon>
        <taxon>Cyanobacteriota</taxon>
        <taxon>Cyanophyceae</taxon>
        <taxon>Oscillatoriophycideae</taxon>
        <taxon>Chroococcales</taxon>
        <taxon>Aphanothecaceae</taxon>
        <taxon>Gloeothece</taxon>
        <taxon>Gloeothece citriformis</taxon>
    </lineage>
</organism>
<dbReference type="EMBL" id="CP001291">
    <property type="protein sequence ID" value="ACK72091.1"/>
    <property type="molecule type" value="Genomic_DNA"/>
</dbReference>
<dbReference type="RefSeq" id="WP_015955684.1">
    <property type="nucleotide sequence ID" value="NC_011729.1"/>
</dbReference>
<dbReference type="SMR" id="B7KHZ4"/>
<dbReference type="STRING" id="65393.PCC7424_3710"/>
<dbReference type="KEGG" id="cyc:PCC7424_3710"/>
<dbReference type="eggNOG" id="COG0197">
    <property type="taxonomic scope" value="Bacteria"/>
</dbReference>
<dbReference type="HOGENOM" id="CLU_078858_2_1_3"/>
<dbReference type="OrthoDB" id="9802589at2"/>
<dbReference type="Proteomes" id="UP000002384">
    <property type="component" value="Chromosome"/>
</dbReference>
<dbReference type="GO" id="GO:0022625">
    <property type="term" value="C:cytosolic large ribosomal subunit"/>
    <property type="evidence" value="ECO:0007669"/>
    <property type="project" value="TreeGrafter"/>
</dbReference>
<dbReference type="GO" id="GO:0019843">
    <property type="term" value="F:rRNA binding"/>
    <property type="evidence" value="ECO:0007669"/>
    <property type="project" value="UniProtKB-UniRule"/>
</dbReference>
<dbReference type="GO" id="GO:0003735">
    <property type="term" value="F:structural constituent of ribosome"/>
    <property type="evidence" value="ECO:0007669"/>
    <property type="project" value="InterPro"/>
</dbReference>
<dbReference type="GO" id="GO:0000049">
    <property type="term" value="F:tRNA binding"/>
    <property type="evidence" value="ECO:0007669"/>
    <property type="project" value="UniProtKB-KW"/>
</dbReference>
<dbReference type="GO" id="GO:0006412">
    <property type="term" value="P:translation"/>
    <property type="evidence" value="ECO:0007669"/>
    <property type="project" value="UniProtKB-UniRule"/>
</dbReference>
<dbReference type="CDD" id="cd01433">
    <property type="entry name" value="Ribosomal_L16_L10e"/>
    <property type="match status" value="1"/>
</dbReference>
<dbReference type="FunFam" id="3.90.1170.10:FF:000001">
    <property type="entry name" value="50S ribosomal protein L16"/>
    <property type="match status" value="1"/>
</dbReference>
<dbReference type="Gene3D" id="3.90.1170.10">
    <property type="entry name" value="Ribosomal protein L10e/L16"/>
    <property type="match status" value="1"/>
</dbReference>
<dbReference type="HAMAP" id="MF_01342">
    <property type="entry name" value="Ribosomal_uL16"/>
    <property type="match status" value="1"/>
</dbReference>
<dbReference type="InterPro" id="IPR047873">
    <property type="entry name" value="Ribosomal_uL16"/>
</dbReference>
<dbReference type="InterPro" id="IPR000114">
    <property type="entry name" value="Ribosomal_uL16_bact-type"/>
</dbReference>
<dbReference type="InterPro" id="IPR020798">
    <property type="entry name" value="Ribosomal_uL16_CS"/>
</dbReference>
<dbReference type="InterPro" id="IPR016180">
    <property type="entry name" value="Ribosomal_uL16_dom"/>
</dbReference>
<dbReference type="InterPro" id="IPR036920">
    <property type="entry name" value="Ribosomal_uL16_sf"/>
</dbReference>
<dbReference type="NCBIfam" id="TIGR01164">
    <property type="entry name" value="rplP_bact"/>
    <property type="match status" value="1"/>
</dbReference>
<dbReference type="PANTHER" id="PTHR12220">
    <property type="entry name" value="50S/60S RIBOSOMAL PROTEIN L16"/>
    <property type="match status" value="1"/>
</dbReference>
<dbReference type="PANTHER" id="PTHR12220:SF13">
    <property type="entry name" value="LARGE RIBOSOMAL SUBUNIT PROTEIN UL16M"/>
    <property type="match status" value="1"/>
</dbReference>
<dbReference type="Pfam" id="PF00252">
    <property type="entry name" value="Ribosomal_L16"/>
    <property type="match status" value="1"/>
</dbReference>
<dbReference type="PRINTS" id="PR00060">
    <property type="entry name" value="RIBOSOMALL16"/>
</dbReference>
<dbReference type="SUPFAM" id="SSF54686">
    <property type="entry name" value="Ribosomal protein L16p/L10e"/>
    <property type="match status" value="1"/>
</dbReference>
<dbReference type="PROSITE" id="PS00586">
    <property type="entry name" value="RIBOSOMAL_L16_1"/>
    <property type="match status" value="1"/>
</dbReference>
<dbReference type="PROSITE" id="PS00701">
    <property type="entry name" value="RIBOSOMAL_L16_2"/>
    <property type="match status" value="1"/>
</dbReference>
<comment type="function">
    <text evidence="1">Binds 23S rRNA and is also seen to make contacts with the A and possibly P site tRNAs.</text>
</comment>
<comment type="subunit">
    <text evidence="1">Part of the 50S ribosomal subunit.</text>
</comment>
<comment type="similarity">
    <text evidence="1">Belongs to the universal ribosomal protein uL16 family.</text>
</comment>
<reference key="1">
    <citation type="journal article" date="2011" name="MBio">
        <title>Novel metabolic attributes of the genus Cyanothece, comprising a group of unicellular nitrogen-fixing Cyanobacteria.</title>
        <authorList>
            <person name="Bandyopadhyay A."/>
            <person name="Elvitigala T."/>
            <person name="Welsh E."/>
            <person name="Stockel J."/>
            <person name="Liberton M."/>
            <person name="Min H."/>
            <person name="Sherman L.A."/>
            <person name="Pakrasi H.B."/>
        </authorList>
    </citation>
    <scope>NUCLEOTIDE SEQUENCE [LARGE SCALE GENOMIC DNA]</scope>
    <source>
        <strain>PCC 7424</strain>
    </source>
</reference>
<evidence type="ECO:0000255" key="1">
    <source>
        <dbReference type="HAMAP-Rule" id="MF_01342"/>
    </source>
</evidence>
<evidence type="ECO:0000305" key="2"/>
<keyword id="KW-1185">Reference proteome</keyword>
<keyword id="KW-0687">Ribonucleoprotein</keyword>
<keyword id="KW-0689">Ribosomal protein</keyword>
<keyword id="KW-0694">RNA-binding</keyword>
<keyword id="KW-0699">rRNA-binding</keyword>
<keyword id="KW-0820">tRNA-binding</keyword>
<accession>B7KHZ4</accession>
<feature type="chain" id="PRO_1000142956" description="Large ribosomal subunit protein uL16">
    <location>
        <begin position="1"/>
        <end position="139"/>
    </location>
</feature>
<name>RL16_GLOC7</name>
<proteinExistence type="inferred from homology"/>